<reference key="1">
    <citation type="journal article" date="1995" name="Antimicrob. Agents Chemother.">
        <title>Cloning of multidrug resistance gene pqrA from Proteus vulgaris.</title>
        <authorList>
            <person name="Ishida H."/>
            <person name="Fuziwara H."/>
            <person name="Kaibori Y."/>
            <person name="Horiuchi T."/>
            <person name="Sato K."/>
            <person name="Osada Y."/>
        </authorList>
    </citation>
    <scope>NUCLEOTIDE SEQUENCE [GENOMIC DNA]</scope>
    <scope>FUNCTION</scope>
    <source>
        <strain>881051</strain>
    </source>
</reference>
<proteinExistence type="predicted"/>
<name>PQRA_PROVU</name>
<gene>
    <name evidence="3" type="primary">pqrA</name>
</gene>
<comment type="function">
    <text evidence="2">Upon expression in E.coli strain KY2563 confers resistance to antibiotics ofloxacin, ciprofloxacin, tetracycline, chloramphenicol, and ceftazidime (increases minimal inhibitory concentration by 8-32 times); also decreases expression of OmpF (PubMed:7726514).</text>
</comment>
<protein>
    <recommendedName>
        <fullName evidence="4">Probable transcription factor PqrA</fullName>
    </recommendedName>
</protein>
<keyword id="KW-0046">Antibiotic resistance</keyword>
<keyword id="KW-0238">DNA-binding</keyword>
<keyword id="KW-0804">Transcription</keyword>
<keyword id="KW-0805">Transcription regulation</keyword>
<sequence length="122" mass="14240">MAENVVNDILKWLETQLQRNEGIKIDTIANKSGYSKWHLQRIFKDFKGCTLGEYVRKRRLLEAAKSLQEKDMSILDIALMYGFSSQATFTRIFKKHFNTTPAKFRENGTMPDTHCFMSCETH</sequence>
<feature type="chain" id="PRO_0000194547" description="Probable transcription factor PqrA">
    <location>
        <begin position="1"/>
        <end position="122"/>
    </location>
</feature>
<feature type="domain" description="HTH araC/xylS-type" evidence="1">
    <location>
        <begin position="7"/>
        <end position="107"/>
    </location>
</feature>
<feature type="DNA-binding region" description="H-T-H motif" evidence="1">
    <location>
        <begin position="26"/>
        <end position="47"/>
    </location>
</feature>
<feature type="DNA-binding region" description="H-T-H motif" evidence="1">
    <location>
        <begin position="74"/>
        <end position="97"/>
    </location>
</feature>
<evidence type="ECO:0000255" key="1">
    <source>
        <dbReference type="PROSITE-ProRule" id="PRU00593"/>
    </source>
</evidence>
<evidence type="ECO:0000269" key="2">
    <source>
    </source>
</evidence>
<evidence type="ECO:0000303" key="3">
    <source>
    </source>
</evidence>
<evidence type="ECO:0000305" key="4"/>
<organism>
    <name type="scientific">Proteus vulgaris</name>
    <dbReference type="NCBI Taxonomy" id="585"/>
    <lineage>
        <taxon>Bacteria</taxon>
        <taxon>Pseudomonadati</taxon>
        <taxon>Pseudomonadota</taxon>
        <taxon>Gammaproteobacteria</taxon>
        <taxon>Enterobacterales</taxon>
        <taxon>Morganellaceae</taxon>
        <taxon>Proteus</taxon>
    </lineage>
</organism>
<dbReference type="EMBL" id="D13561">
    <property type="protein sequence ID" value="BAA02757.1"/>
    <property type="molecule type" value="Genomic_DNA"/>
</dbReference>
<dbReference type="SMR" id="Q52620"/>
<dbReference type="STRING" id="585.DR95_1054"/>
<dbReference type="eggNOG" id="COG2207">
    <property type="taxonomic scope" value="Bacteria"/>
</dbReference>
<dbReference type="GO" id="GO:0003700">
    <property type="term" value="F:DNA-binding transcription factor activity"/>
    <property type="evidence" value="ECO:0007669"/>
    <property type="project" value="InterPro"/>
</dbReference>
<dbReference type="GO" id="GO:0043565">
    <property type="term" value="F:sequence-specific DNA binding"/>
    <property type="evidence" value="ECO:0007669"/>
    <property type="project" value="InterPro"/>
</dbReference>
<dbReference type="GO" id="GO:0046677">
    <property type="term" value="P:response to antibiotic"/>
    <property type="evidence" value="ECO:0007669"/>
    <property type="project" value="UniProtKB-KW"/>
</dbReference>
<dbReference type="Gene3D" id="1.10.10.60">
    <property type="entry name" value="Homeodomain-like"/>
    <property type="match status" value="2"/>
</dbReference>
<dbReference type="InterPro" id="IPR009057">
    <property type="entry name" value="Homeodomain-like_sf"/>
</dbReference>
<dbReference type="InterPro" id="IPR018060">
    <property type="entry name" value="HTH_AraC"/>
</dbReference>
<dbReference type="InterPro" id="IPR018062">
    <property type="entry name" value="HTH_AraC-typ_CS"/>
</dbReference>
<dbReference type="InterPro" id="IPR050959">
    <property type="entry name" value="MarA-like"/>
</dbReference>
<dbReference type="InterPro" id="IPR020449">
    <property type="entry name" value="Tscrpt_reg_AraC-type_HTH"/>
</dbReference>
<dbReference type="PANTHER" id="PTHR47504">
    <property type="entry name" value="RIGHT ORIGIN-BINDING PROTEIN"/>
    <property type="match status" value="1"/>
</dbReference>
<dbReference type="PANTHER" id="PTHR47504:SF5">
    <property type="entry name" value="RIGHT ORIGIN-BINDING PROTEIN"/>
    <property type="match status" value="1"/>
</dbReference>
<dbReference type="Pfam" id="PF12833">
    <property type="entry name" value="HTH_18"/>
    <property type="match status" value="1"/>
</dbReference>
<dbReference type="PRINTS" id="PR00032">
    <property type="entry name" value="HTHARAC"/>
</dbReference>
<dbReference type="SMART" id="SM00342">
    <property type="entry name" value="HTH_ARAC"/>
    <property type="match status" value="1"/>
</dbReference>
<dbReference type="SUPFAM" id="SSF46689">
    <property type="entry name" value="Homeodomain-like"/>
    <property type="match status" value="2"/>
</dbReference>
<dbReference type="PROSITE" id="PS00041">
    <property type="entry name" value="HTH_ARAC_FAMILY_1"/>
    <property type="match status" value="1"/>
</dbReference>
<dbReference type="PROSITE" id="PS01124">
    <property type="entry name" value="HTH_ARAC_FAMILY_2"/>
    <property type="match status" value="1"/>
</dbReference>
<accession>Q52620</accession>